<dbReference type="EMBL" id="X07189">
    <property type="protein sequence ID" value="CAA30169.1"/>
    <property type="molecule type" value="mRNA"/>
</dbReference>
<dbReference type="PIR" id="S00847">
    <property type="entry name" value="S00847"/>
</dbReference>
<dbReference type="SMR" id="P20762"/>
<dbReference type="FunCoup" id="P20762">
    <property type="interactions" value="2"/>
</dbReference>
<dbReference type="GlyGen" id="P20762">
    <property type="glycosylation" value="1 site, 2 N-linked glycans (1 site)"/>
</dbReference>
<dbReference type="iPTMnet" id="P20762"/>
<dbReference type="PaxDb" id="10116-ENSRNOP00000060258"/>
<dbReference type="Ensembl" id="ENSRNOT00000111892.1">
    <property type="protein sequence ID" value="ENSRNOP00000078974.1"/>
    <property type="gene ID" value="ENSRNOG00000065917.1"/>
</dbReference>
<dbReference type="AGR" id="RGD:150342189"/>
<dbReference type="eggNOG" id="ENOG502R54U">
    <property type="taxonomic scope" value="Eukaryota"/>
</dbReference>
<dbReference type="GeneTree" id="ENSGT00940000163307"/>
<dbReference type="InParanoid" id="P20762"/>
<dbReference type="OMA" id="SSWNTEN"/>
<dbReference type="PhylomeDB" id="P20762"/>
<dbReference type="TreeFam" id="TF334176"/>
<dbReference type="Reactome" id="R-RNO-166663">
    <property type="pathway name" value="Initial triggering of complement"/>
</dbReference>
<dbReference type="Reactome" id="R-RNO-173623">
    <property type="pathway name" value="Classical antibody-mediated complement activation"/>
</dbReference>
<dbReference type="Reactome" id="R-RNO-2029481">
    <property type="pathway name" value="FCGR activation"/>
</dbReference>
<dbReference type="Reactome" id="R-RNO-2029482">
    <property type="pathway name" value="Regulation of actin dynamics for phagocytic cup formation"/>
</dbReference>
<dbReference type="Reactome" id="R-RNO-2029485">
    <property type="pathway name" value="Role of phospholipids in phagocytosis"/>
</dbReference>
<dbReference type="Reactome" id="R-RNO-977606">
    <property type="pathway name" value="Regulation of Complement cascade"/>
</dbReference>
<dbReference type="PRO" id="PR:P20762"/>
<dbReference type="Proteomes" id="UP000002494">
    <property type="component" value="Chromosome 6"/>
</dbReference>
<dbReference type="GO" id="GO:0042571">
    <property type="term" value="C:immunoglobulin complex, circulating"/>
    <property type="evidence" value="ECO:0000318"/>
    <property type="project" value="GO_Central"/>
</dbReference>
<dbReference type="GO" id="GO:0003823">
    <property type="term" value="F:antigen binding"/>
    <property type="evidence" value="ECO:0000318"/>
    <property type="project" value="GO_Central"/>
</dbReference>
<dbReference type="GO" id="GO:0034987">
    <property type="term" value="F:immunoglobulin receptor binding"/>
    <property type="evidence" value="ECO:0000318"/>
    <property type="project" value="GO_Central"/>
</dbReference>
<dbReference type="GO" id="GO:0019731">
    <property type="term" value="P:antibacterial humoral response"/>
    <property type="evidence" value="ECO:0000318"/>
    <property type="project" value="GO_Central"/>
</dbReference>
<dbReference type="GO" id="GO:0006958">
    <property type="term" value="P:complement activation, classical pathway"/>
    <property type="evidence" value="ECO:0000318"/>
    <property type="project" value="GO_Central"/>
</dbReference>
<dbReference type="CDD" id="cd21817">
    <property type="entry name" value="IgC1_CH1_IgEG"/>
    <property type="match status" value="1"/>
</dbReference>
<dbReference type="CDD" id="cd05768">
    <property type="entry name" value="IgC1_CH3_IgAGD_CH4_IgAEM"/>
    <property type="match status" value="1"/>
</dbReference>
<dbReference type="FunFam" id="2.60.40.10:FF:001739">
    <property type="entry name" value="Ig gamma-2A chain C region"/>
    <property type="match status" value="1"/>
</dbReference>
<dbReference type="FunFam" id="2.60.40.10:FF:000463">
    <property type="entry name" value="Immunoglobulin heavy constant gamma 1"/>
    <property type="match status" value="1"/>
</dbReference>
<dbReference type="FunFam" id="2.60.40.10:FF:001129">
    <property type="entry name" value="Immunoglobulin heavy constant gamma 1"/>
    <property type="match status" value="1"/>
</dbReference>
<dbReference type="Gene3D" id="2.60.40.10">
    <property type="entry name" value="Immunoglobulins"/>
    <property type="match status" value="3"/>
</dbReference>
<dbReference type="InterPro" id="IPR007110">
    <property type="entry name" value="Ig-like_dom"/>
</dbReference>
<dbReference type="InterPro" id="IPR036179">
    <property type="entry name" value="Ig-like_dom_sf"/>
</dbReference>
<dbReference type="InterPro" id="IPR013783">
    <property type="entry name" value="Ig-like_fold"/>
</dbReference>
<dbReference type="InterPro" id="IPR003006">
    <property type="entry name" value="Ig/MHC_CS"/>
</dbReference>
<dbReference type="InterPro" id="IPR003597">
    <property type="entry name" value="Ig_C1-set"/>
</dbReference>
<dbReference type="InterPro" id="IPR050380">
    <property type="entry name" value="Immune_Resp_Modulators"/>
</dbReference>
<dbReference type="PANTHER" id="PTHR23411">
    <property type="entry name" value="TAPASIN"/>
    <property type="match status" value="1"/>
</dbReference>
<dbReference type="Pfam" id="PF07654">
    <property type="entry name" value="C1-set"/>
    <property type="match status" value="3"/>
</dbReference>
<dbReference type="SMART" id="SM00407">
    <property type="entry name" value="IGc1"/>
    <property type="match status" value="3"/>
</dbReference>
<dbReference type="SUPFAM" id="SSF48726">
    <property type="entry name" value="Immunoglobulin"/>
    <property type="match status" value="3"/>
</dbReference>
<dbReference type="PROSITE" id="PS50835">
    <property type="entry name" value="IG_LIKE"/>
    <property type="match status" value="3"/>
</dbReference>
<dbReference type="PROSITE" id="PS00290">
    <property type="entry name" value="IG_MHC"/>
    <property type="match status" value="1"/>
</dbReference>
<organism>
    <name type="scientific">Rattus norvegicus</name>
    <name type="common">Rat</name>
    <dbReference type="NCBI Taxonomy" id="10116"/>
    <lineage>
        <taxon>Eukaryota</taxon>
        <taxon>Metazoa</taxon>
        <taxon>Chordata</taxon>
        <taxon>Craniata</taxon>
        <taxon>Vertebrata</taxon>
        <taxon>Euteleostomi</taxon>
        <taxon>Mammalia</taxon>
        <taxon>Eutheria</taxon>
        <taxon>Euarchontoglires</taxon>
        <taxon>Glires</taxon>
        <taxon>Rodentia</taxon>
        <taxon>Myomorpha</taxon>
        <taxon>Muroidea</taxon>
        <taxon>Muridae</taxon>
        <taxon>Murinae</taxon>
        <taxon>Rattus</taxon>
    </lineage>
</organism>
<proteinExistence type="evidence at transcript level"/>
<name>IGG2C_RAT</name>
<evidence type="ECO:0000255" key="1">
    <source>
        <dbReference type="PROSITE-ProRule" id="PRU00114"/>
    </source>
</evidence>
<protein>
    <recommendedName>
        <fullName>Ig gamma-2C chain C region</fullName>
    </recommendedName>
</protein>
<accession>P20762</accession>
<reference key="1">
    <citation type="journal article" date="1988" name="Eur. J. Immunol.">
        <title>Sequence of a rat immunoglobulin gamma 2c heavy chain constant region cDNA: extensive homology to mouse gamma 3.</title>
        <authorList>
            <person name="Brueggemann M."/>
            <person name="Delmastro-Galfre P."/>
            <person name="Waldmann H."/>
            <person name="Calabi F."/>
        </authorList>
    </citation>
    <scope>NUCLEOTIDE SEQUENCE [MRNA]</scope>
</reference>
<keyword id="KW-1015">Disulfide bond</keyword>
<keyword id="KW-0393">Immunoglobulin domain</keyword>
<keyword id="KW-1185">Reference proteome</keyword>
<sequence length="329" mass="36572">ARTTAPSVYPLVPGCSGTSGSLVTLGCLVKGYFPEPVTVKWNSGALSSGVHTFPAVLQSGLYTLSSSVTVPSSTWSSQTVTCSVAHPATKSNLIKRIEPRRPKPRPPTDICSCDDNLGRPSVFIFPPKPKDILMITLTPKVTCVVVDVSEEEPDVQFSWFVDNVRVFTAQTQPHEEQLNGTFRVVSTLHIQHQDWMSGKEFKCKVNNKDLPSPIEKTISKPRGKARTPQVYTIPPPREQMSKNKVSLTCMVTSFYPASISVEWERNGELEQDYKNTLPVLDSDESYFLYSKLSVDTDSWMRGDIYTCSVVHEALHNHHTQKNLSRSPGK</sequence>
<feature type="chain" id="PRO_0000153594" description="Ig gamma-2C chain C region">
    <location>
        <begin position="1" status="less than"/>
        <end position="329"/>
    </location>
</feature>
<feature type="region of interest" description="CH1">
    <location>
        <begin position="1"/>
        <end position="97"/>
    </location>
</feature>
<feature type="region of interest" description="Hinge">
    <location>
        <begin position="98"/>
        <end position="113"/>
    </location>
</feature>
<feature type="region of interest" description="CH2">
    <location>
        <begin position="114"/>
        <end position="222"/>
    </location>
</feature>
<feature type="region of interest" description="CH3">
    <location>
        <begin position="223"/>
        <end position="329"/>
    </location>
</feature>
<feature type="disulfide bond" description="Interchain (with a light chain)" evidence="1">
    <location>
        <position position="15"/>
    </location>
</feature>
<feature type="disulfide bond" evidence="1">
    <location>
        <begin position="27"/>
        <end position="82"/>
    </location>
</feature>
<feature type="disulfide bond" description="Interchain (with a heavy chain)" evidence="1">
    <location>
        <position position="111"/>
    </location>
</feature>
<feature type="disulfide bond" description="Interchain (with a heavy chain)" evidence="1">
    <location>
        <position position="113"/>
    </location>
</feature>
<feature type="disulfide bond" evidence="1">
    <location>
        <begin position="143"/>
        <end position="203"/>
    </location>
</feature>
<feature type="disulfide bond" evidence="1">
    <location>
        <begin position="249"/>
        <end position="307"/>
    </location>
</feature>
<feature type="non-terminal residue">
    <location>
        <position position="1"/>
    </location>
</feature>